<accession>Q8FHF2</accession>
<dbReference type="EC" id="2.1.1.144" evidence="1"/>
<dbReference type="EMBL" id="AE014075">
    <property type="protein sequence ID" value="AAN80400.1"/>
    <property type="molecule type" value="Genomic_DNA"/>
</dbReference>
<dbReference type="RefSeq" id="WP_001286540.1">
    <property type="nucleotide sequence ID" value="NZ_CP051263.1"/>
</dbReference>
<dbReference type="SMR" id="Q8FHF2"/>
<dbReference type="STRING" id="199310.c1942"/>
<dbReference type="KEGG" id="ecc:c1942"/>
<dbReference type="eggNOG" id="COG4106">
    <property type="taxonomic scope" value="Bacteria"/>
</dbReference>
<dbReference type="HOGENOM" id="CLU_037990_5_2_6"/>
<dbReference type="BioCyc" id="ECOL199310:C1942-MONOMER"/>
<dbReference type="Proteomes" id="UP000001410">
    <property type="component" value="Chromosome"/>
</dbReference>
<dbReference type="GO" id="GO:0005737">
    <property type="term" value="C:cytoplasm"/>
    <property type="evidence" value="ECO:0007669"/>
    <property type="project" value="UniProtKB-SubCell"/>
</dbReference>
<dbReference type="GO" id="GO:0030798">
    <property type="term" value="F:trans-aconitate 2-methyltransferase activity"/>
    <property type="evidence" value="ECO:0007669"/>
    <property type="project" value="UniProtKB-UniRule"/>
</dbReference>
<dbReference type="GO" id="GO:0032259">
    <property type="term" value="P:methylation"/>
    <property type="evidence" value="ECO:0007669"/>
    <property type="project" value="UniProtKB-KW"/>
</dbReference>
<dbReference type="CDD" id="cd02440">
    <property type="entry name" value="AdoMet_MTases"/>
    <property type="match status" value="1"/>
</dbReference>
<dbReference type="Gene3D" id="1.10.150.290">
    <property type="entry name" value="S-adenosyl-L-methionine-dependent methyltransferases"/>
    <property type="match status" value="1"/>
</dbReference>
<dbReference type="Gene3D" id="3.40.50.150">
    <property type="entry name" value="Vaccinia Virus protein VP39"/>
    <property type="match status" value="1"/>
</dbReference>
<dbReference type="HAMAP" id="MF_00560">
    <property type="entry name" value="Tran_acon_Me_trans"/>
    <property type="match status" value="1"/>
</dbReference>
<dbReference type="InterPro" id="IPR041698">
    <property type="entry name" value="Methyltransf_25"/>
</dbReference>
<dbReference type="InterPro" id="IPR029063">
    <property type="entry name" value="SAM-dependent_MTases_sf"/>
</dbReference>
<dbReference type="InterPro" id="IPR023506">
    <property type="entry name" value="Trans-aconitate_MeTrfase"/>
</dbReference>
<dbReference type="InterPro" id="IPR023149">
    <property type="entry name" value="Trans_acon_MeTrfase_C"/>
</dbReference>
<dbReference type="NCBIfam" id="NF002463">
    <property type="entry name" value="PRK01683.1"/>
    <property type="match status" value="1"/>
</dbReference>
<dbReference type="PANTHER" id="PTHR43861:SF1">
    <property type="entry name" value="TRANS-ACONITATE 2-METHYLTRANSFERASE"/>
    <property type="match status" value="1"/>
</dbReference>
<dbReference type="PANTHER" id="PTHR43861">
    <property type="entry name" value="TRANS-ACONITATE 2-METHYLTRANSFERASE-RELATED"/>
    <property type="match status" value="1"/>
</dbReference>
<dbReference type="Pfam" id="PF13649">
    <property type="entry name" value="Methyltransf_25"/>
    <property type="match status" value="1"/>
</dbReference>
<dbReference type="SUPFAM" id="SSF53335">
    <property type="entry name" value="S-adenosyl-L-methionine-dependent methyltransferases"/>
    <property type="match status" value="1"/>
</dbReference>
<protein>
    <recommendedName>
        <fullName evidence="1">Trans-aconitate 2-methyltransferase</fullName>
        <ecNumber evidence="1">2.1.1.144</ecNumber>
    </recommendedName>
</protein>
<proteinExistence type="inferred from homology"/>
<name>TAM_ECOL6</name>
<evidence type="ECO:0000255" key="1">
    <source>
        <dbReference type="HAMAP-Rule" id="MF_00560"/>
    </source>
</evidence>
<sequence>MSDWNPSLYLHFAAERSRPAVELLARVPLENIEYIADLGCGPGNSTALLHQRWPAARITGIDSSPAMIAEARSALPDCLFVEADIRNWQPEQALDLIFANASLQWLPDHYELFPHLVSLLSPLGVLAVQMPDNWLEPTHVLMREVAWEQNYPDRGREPLAGVHAYYDILSEAGCEVDIWRTTYYHQMPSHQAIIDWVTATGLRPWLQDLTESEQQHFLTRYHQMLEEQYPLQENGQILLAFPRLFIVARRTE</sequence>
<keyword id="KW-0963">Cytoplasm</keyword>
<keyword id="KW-0489">Methyltransferase</keyword>
<keyword id="KW-1185">Reference proteome</keyword>
<keyword id="KW-0949">S-adenosyl-L-methionine</keyword>
<keyword id="KW-0808">Transferase</keyword>
<organism>
    <name type="scientific">Escherichia coli O6:H1 (strain CFT073 / ATCC 700928 / UPEC)</name>
    <dbReference type="NCBI Taxonomy" id="199310"/>
    <lineage>
        <taxon>Bacteria</taxon>
        <taxon>Pseudomonadati</taxon>
        <taxon>Pseudomonadota</taxon>
        <taxon>Gammaproteobacteria</taxon>
        <taxon>Enterobacterales</taxon>
        <taxon>Enterobacteriaceae</taxon>
        <taxon>Escherichia</taxon>
    </lineage>
</organism>
<reference key="1">
    <citation type="journal article" date="2002" name="Proc. Natl. Acad. Sci. U.S.A.">
        <title>Extensive mosaic structure revealed by the complete genome sequence of uropathogenic Escherichia coli.</title>
        <authorList>
            <person name="Welch R.A."/>
            <person name="Burland V."/>
            <person name="Plunkett G. III"/>
            <person name="Redford P."/>
            <person name="Roesch P."/>
            <person name="Rasko D."/>
            <person name="Buckles E.L."/>
            <person name="Liou S.-R."/>
            <person name="Boutin A."/>
            <person name="Hackett J."/>
            <person name="Stroud D."/>
            <person name="Mayhew G.F."/>
            <person name="Rose D.J."/>
            <person name="Zhou S."/>
            <person name="Schwartz D.C."/>
            <person name="Perna N.T."/>
            <person name="Mobley H.L.T."/>
            <person name="Donnenberg M.S."/>
            <person name="Blattner F.R."/>
        </authorList>
    </citation>
    <scope>NUCLEOTIDE SEQUENCE [LARGE SCALE GENOMIC DNA]</scope>
    <source>
        <strain>CFT073 / ATCC 700928 / UPEC</strain>
    </source>
</reference>
<feature type="chain" id="PRO_1000056558" description="Trans-aconitate 2-methyltransferase">
    <location>
        <begin position="1"/>
        <end position="252"/>
    </location>
</feature>
<comment type="function">
    <text evidence="1">Catalyzes the S-adenosylmethionine monomethyl esterification of trans-aconitate.</text>
</comment>
<comment type="catalytic activity">
    <reaction evidence="1">
        <text>trans-aconitate + S-adenosyl-L-methionine = (E)-3-(methoxycarbonyl)pent-2-enedioate + S-adenosyl-L-homocysteine</text>
        <dbReference type="Rhea" id="RHEA:14969"/>
        <dbReference type="ChEBI" id="CHEBI:15708"/>
        <dbReference type="ChEBI" id="CHEBI:57470"/>
        <dbReference type="ChEBI" id="CHEBI:57856"/>
        <dbReference type="ChEBI" id="CHEBI:59789"/>
        <dbReference type="EC" id="2.1.1.144"/>
    </reaction>
</comment>
<comment type="subcellular location">
    <subcellularLocation>
        <location evidence="1">Cytoplasm</location>
    </subcellularLocation>
</comment>
<comment type="similarity">
    <text evidence="1">Belongs to the methyltransferase superfamily. Tam family.</text>
</comment>
<gene>
    <name evidence="1" type="primary">tam</name>
    <name type="ordered locus">c1942</name>
</gene>